<evidence type="ECO:0000255" key="1">
    <source>
        <dbReference type="HAMAP-Rule" id="MF_01337"/>
    </source>
</evidence>
<evidence type="ECO:0000305" key="2"/>
<gene>
    <name evidence="1" type="primary">rplR</name>
    <name type="ordered locus">azo3401</name>
</gene>
<keyword id="KW-1185">Reference proteome</keyword>
<keyword id="KW-0687">Ribonucleoprotein</keyword>
<keyword id="KW-0689">Ribosomal protein</keyword>
<keyword id="KW-0694">RNA-binding</keyword>
<keyword id="KW-0699">rRNA-binding</keyword>
<dbReference type="EMBL" id="AM406670">
    <property type="protein sequence ID" value="CAL96017.1"/>
    <property type="molecule type" value="Genomic_DNA"/>
</dbReference>
<dbReference type="RefSeq" id="WP_011767124.1">
    <property type="nucleotide sequence ID" value="NC_008702.1"/>
</dbReference>
<dbReference type="SMR" id="A1KB11"/>
<dbReference type="STRING" id="62928.azo3401"/>
<dbReference type="KEGG" id="aoa:dqs_3540"/>
<dbReference type="KEGG" id="azo:azo3401"/>
<dbReference type="eggNOG" id="COG0256">
    <property type="taxonomic scope" value="Bacteria"/>
</dbReference>
<dbReference type="HOGENOM" id="CLU_098841_0_1_4"/>
<dbReference type="OrthoDB" id="9810939at2"/>
<dbReference type="Proteomes" id="UP000002588">
    <property type="component" value="Chromosome"/>
</dbReference>
<dbReference type="GO" id="GO:0022625">
    <property type="term" value="C:cytosolic large ribosomal subunit"/>
    <property type="evidence" value="ECO:0007669"/>
    <property type="project" value="TreeGrafter"/>
</dbReference>
<dbReference type="GO" id="GO:0008097">
    <property type="term" value="F:5S rRNA binding"/>
    <property type="evidence" value="ECO:0007669"/>
    <property type="project" value="TreeGrafter"/>
</dbReference>
<dbReference type="GO" id="GO:0003735">
    <property type="term" value="F:structural constituent of ribosome"/>
    <property type="evidence" value="ECO:0007669"/>
    <property type="project" value="InterPro"/>
</dbReference>
<dbReference type="GO" id="GO:0006412">
    <property type="term" value="P:translation"/>
    <property type="evidence" value="ECO:0007669"/>
    <property type="project" value="UniProtKB-UniRule"/>
</dbReference>
<dbReference type="CDD" id="cd00432">
    <property type="entry name" value="Ribosomal_L18_L5e"/>
    <property type="match status" value="1"/>
</dbReference>
<dbReference type="FunFam" id="3.30.420.100:FF:000001">
    <property type="entry name" value="50S ribosomal protein L18"/>
    <property type="match status" value="1"/>
</dbReference>
<dbReference type="Gene3D" id="3.30.420.100">
    <property type="match status" value="1"/>
</dbReference>
<dbReference type="HAMAP" id="MF_01337_B">
    <property type="entry name" value="Ribosomal_uL18_B"/>
    <property type="match status" value="1"/>
</dbReference>
<dbReference type="InterPro" id="IPR004389">
    <property type="entry name" value="Ribosomal_uL18_bac-type"/>
</dbReference>
<dbReference type="InterPro" id="IPR005484">
    <property type="entry name" value="Ribosomal_uL18_bac/euk"/>
</dbReference>
<dbReference type="NCBIfam" id="TIGR00060">
    <property type="entry name" value="L18_bact"/>
    <property type="match status" value="1"/>
</dbReference>
<dbReference type="PANTHER" id="PTHR12899">
    <property type="entry name" value="39S RIBOSOMAL PROTEIN L18, MITOCHONDRIAL"/>
    <property type="match status" value="1"/>
</dbReference>
<dbReference type="PANTHER" id="PTHR12899:SF3">
    <property type="entry name" value="LARGE RIBOSOMAL SUBUNIT PROTEIN UL18M"/>
    <property type="match status" value="1"/>
</dbReference>
<dbReference type="Pfam" id="PF00861">
    <property type="entry name" value="Ribosomal_L18p"/>
    <property type="match status" value="1"/>
</dbReference>
<dbReference type="SUPFAM" id="SSF53137">
    <property type="entry name" value="Translational machinery components"/>
    <property type="match status" value="1"/>
</dbReference>
<organism>
    <name type="scientific">Azoarcus sp. (strain BH72)</name>
    <dbReference type="NCBI Taxonomy" id="418699"/>
    <lineage>
        <taxon>Bacteria</taxon>
        <taxon>Pseudomonadati</taxon>
        <taxon>Pseudomonadota</taxon>
        <taxon>Betaproteobacteria</taxon>
        <taxon>Rhodocyclales</taxon>
        <taxon>Zoogloeaceae</taxon>
        <taxon>Azoarcus</taxon>
    </lineage>
</organism>
<proteinExistence type="inferred from homology"/>
<accession>A1KB11</accession>
<comment type="function">
    <text evidence="1">This is one of the proteins that bind and probably mediate the attachment of the 5S RNA into the large ribosomal subunit, where it forms part of the central protuberance.</text>
</comment>
<comment type="subunit">
    <text evidence="1">Part of the 50S ribosomal subunit; part of the 5S rRNA/L5/L18/L25 subcomplex. Contacts the 5S and 23S rRNAs.</text>
</comment>
<comment type="similarity">
    <text evidence="1">Belongs to the universal ribosomal protein uL18 family.</text>
</comment>
<feature type="chain" id="PRO_1000052986" description="Large ribosomal subunit protein uL18">
    <location>
        <begin position="1"/>
        <end position="117"/>
    </location>
</feature>
<reference key="1">
    <citation type="journal article" date="2006" name="Nat. Biotechnol.">
        <title>Complete genome of the mutualistic, N2-fixing grass endophyte Azoarcus sp. strain BH72.</title>
        <authorList>
            <person name="Krause A."/>
            <person name="Ramakumar A."/>
            <person name="Bartels D."/>
            <person name="Battistoni F."/>
            <person name="Bekel T."/>
            <person name="Boch J."/>
            <person name="Boehm M."/>
            <person name="Friedrich F."/>
            <person name="Hurek T."/>
            <person name="Krause L."/>
            <person name="Linke B."/>
            <person name="McHardy A.C."/>
            <person name="Sarkar A."/>
            <person name="Schneiker S."/>
            <person name="Syed A.A."/>
            <person name="Thauer R."/>
            <person name="Vorhoelter F.-J."/>
            <person name="Weidner S."/>
            <person name="Puehler A."/>
            <person name="Reinhold-Hurek B."/>
            <person name="Kaiser O."/>
            <person name="Goesmann A."/>
        </authorList>
    </citation>
    <scope>NUCLEOTIDE SEQUENCE [LARGE SCALE GENOMIC DNA]</scope>
    <source>
        <strain>BH72</strain>
    </source>
</reference>
<name>RL18_AZOSB</name>
<protein>
    <recommendedName>
        <fullName evidence="1">Large ribosomal subunit protein uL18</fullName>
    </recommendedName>
    <alternativeName>
        <fullName evidence="2">50S ribosomal protein L18</fullName>
    </alternativeName>
</protein>
<sequence>MNKKETRLRRARKTRAKLAELKAVRLAVFRTNCHIYAQVISGCGSRVLAAASTVESAVRSQVANGGNKQAAEVVGKLIAERAKAAGIETVAFDRSGFLYHGRVKALAEAAREGGLKF</sequence>